<reference key="1">
    <citation type="submission" date="2005-08" db="EMBL/GenBank/DDBJ databases">
        <title>Complete sequence of Chlorobium chlorochromatii CaD3.</title>
        <authorList>
            <consortium name="US DOE Joint Genome Institute"/>
            <person name="Copeland A."/>
            <person name="Lucas S."/>
            <person name="Lapidus A."/>
            <person name="Barry K."/>
            <person name="Detter J.C."/>
            <person name="Glavina T."/>
            <person name="Hammon N."/>
            <person name="Israni S."/>
            <person name="Pitluck S."/>
            <person name="Bryant D."/>
            <person name="Schmutz J."/>
            <person name="Larimer F."/>
            <person name="Land M."/>
            <person name="Kyrpides N."/>
            <person name="Ivanova N."/>
            <person name="Richardson P."/>
        </authorList>
    </citation>
    <scope>NUCLEOTIDE SEQUENCE [LARGE SCALE GENOMIC DNA]</scope>
    <source>
        <strain>CaD3</strain>
    </source>
</reference>
<accession>Q3AT37</accession>
<keyword id="KW-0963">Cytoplasm</keyword>
<keyword id="KW-0328">Glycosyltransferase</keyword>
<keyword id="KW-0660">Purine salvage</keyword>
<keyword id="KW-0808">Transferase</keyword>
<name>APT_CHLCH</name>
<comment type="function">
    <text evidence="1">Catalyzes a salvage reaction resulting in the formation of AMP, that is energically less costly than de novo synthesis.</text>
</comment>
<comment type="catalytic activity">
    <reaction evidence="1">
        <text>AMP + diphosphate = 5-phospho-alpha-D-ribose 1-diphosphate + adenine</text>
        <dbReference type="Rhea" id="RHEA:16609"/>
        <dbReference type="ChEBI" id="CHEBI:16708"/>
        <dbReference type="ChEBI" id="CHEBI:33019"/>
        <dbReference type="ChEBI" id="CHEBI:58017"/>
        <dbReference type="ChEBI" id="CHEBI:456215"/>
        <dbReference type="EC" id="2.4.2.7"/>
    </reaction>
</comment>
<comment type="pathway">
    <text evidence="1">Purine metabolism; AMP biosynthesis via salvage pathway; AMP from adenine: step 1/1.</text>
</comment>
<comment type="subunit">
    <text evidence="1">Homodimer.</text>
</comment>
<comment type="subcellular location">
    <subcellularLocation>
        <location evidence="1">Cytoplasm</location>
    </subcellularLocation>
</comment>
<comment type="similarity">
    <text evidence="1">Belongs to the purine/pyrimidine phosphoribosyltransferase family.</text>
</comment>
<comment type="sequence caution" evidence="2">
    <conflict type="erroneous initiation">
        <sequence resource="EMBL-CDS" id="ABB27838"/>
    </conflict>
</comment>
<evidence type="ECO:0000255" key="1">
    <source>
        <dbReference type="HAMAP-Rule" id="MF_00004"/>
    </source>
</evidence>
<evidence type="ECO:0000305" key="2"/>
<sequence>MPIKSRIRSIPDYPKKGIMFRDITTLIKDPVGFRLVIDHLTQHYLEAGMDFDVIVGIEARGFIIGGALSYTLGKGFVPVRKPGKLPADVVSQEYELEYGSDKIEIHTDALVEGQRVLLVDDLLATGGTALAAAALVEKVGGIVAEMAFIVNLPDVGGERKLLEKGYNVYSLTDFEGD</sequence>
<proteinExistence type="inferred from homology"/>
<gene>
    <name evidence="1" type="primary">apt</name>
    <name type="ordered locus">Cag_0565</name>
</gene>
<protein>
    <recommendedName>
        <fullName evidence="1">Adenine phosphoribosyltransferase</fullName>
        <shortName evidence="1">APRT</shortName>
        <ecNumber evidence="1">2.4.2.7</ecNumber>
    </recommendedName>
</protein>
<organism>
    <name type="scientific">Chlorobium chlorochromatii (strain CaD3)</name>
    <dbReference type="NCBI Taxonomy" id="340177"/>
    <lineage>
        <taxon>Bacteria</taxon>
        <taxon>Pseudomonadati</taxon>
        <taxon>Chlorobiota</taxon>
        <taxon>Chlorobiia</taxon>
        <taxon>Chlorobiales</taxon>
        <taxon>Chlorobiaceae</taxon>
        <taxon>Chlorobium/Pelodictyon group</taxon>
        <taxon>Chlorobium</taxon>
    </lineage>
</organism>
<feature type="chain" id="PRO_0000321354" description="Adenine phosphoribosyltransferase">
    <location>
        <begin position="1"/>
        <end position="177"/>
    </location>
</feature>
<dbReference type="EC" id="2.4.2.7" evidence="1"/>
<dbReference type="EMBL" id="CP000108">
    <property type="protein sequence ID" value="ABB27838.1"/>
    <property type="status" value="ALT_INIT"/>
    <property type="molecule type" value="Genomic_DNA"/>
</dbReference>
<dbReference type="SMR" id="Q3AT37"/>
<dbReference type="STRING" id="340177.Cag_0565"/>
<dbReference type="KEGG" id="cch:Cag_0565"/>
<dbReference type="eggNOG" id="COG0503">
    <property type="taxonomic scope" value="Bacteria"/>
</dbReference>
<dbReference type="HOGENOM" id="CLU_063339_3_0_10"/>
<dbReference type="OrthoDB" id="9803963at2"/>
<dbReference type="UniPathway" id="UPA00588">
    <property type="reaction ID" value="UER00646"/>
</dbReference>
<dbReference type="GO" id="GO:0005737">
    <property type="term" value="C:cytoplasm"/>
    <property type="evidence" value="ECO:0007669"/>
    <property type="project" value="UniProtKB-SubCell"/>
</dbReference>
<dbReference type="GO" id="GO:0002055">
    <property type="term" value="F:adenine binding"/>
    <property type="evidence" value="ECO:0007669"/>
    <property type="project" value="TreeGrafter"/>
</dbReference>
<dbReference type="GO" id="GO:0003999">
    <property type="term" value="F:adenine phosphoribosyltransferase activity"/>
    <property type="evidence" value="ECO:0007669"/>
    <property type="project" value="UniProtKB-UniRule"/>
</dbReference>
<dbReference type="GO" id="GO:0016208">
    <property type="term" value="F:AMP binding"/>
    <property type="evidence" value="ECO:0007669"/>
    <property type="project" value="TreeGrafter"/>
</dbReference>
<dbReference type="GO" id="GO:0006168">
    <property type="term" value="P:adenine salvage"/>
    <property type="evidence" value="ECO:0007669"/>
    <property type="project" value="InterPro"/>
</dbReference>
<dbReference type="GO" id="GO:0044209">
    <property type="term" value="P:AMP salvage"/>
    <property type="evidence" value="ECO:0007669"/>
    <property type="project" value="UniProtKB-UniRule"/>
</dbReference>
<dbReference type="GO" id="GO:0006166">
    <property type="term" value="P:purine ribonucleoside salvage"/>
    <property type="evidence" value="ECO:0007669"/>
    <property type="project" value="UniProtKB-KW"/>
</dbReference>
<dbReference type="CDD" id="cd06223">
    <property type="entry name" value="PRTases_typeI"/>
    <property type="match status" value="1"/>
</dbReference>
<dbReference type="FunFam" id="3.40.50.2020:FF:000004">
    <property type="entry name" value="Adenine phosphoribosyltransferase"/>
    <property type="match status" value="1"/>
</dbReference>
<dbReference type="Gene3D" id="3.40.50.2020">
    <property type="match status" value="1"/>
</dbReference>
<dbReference type="HAMAP" id="MF_00004">
    <property type="entry name" value="Aden_phosphoribosyltr"/>
    <property type="match status" value="1"/>
</dbReference>
<dbReference type="InterPro" id="IPR005764">
    <property type="entry name" value="Ade_phspho_trans"/>
</dbReference>
<dbReference type="InterPro" id="IPR000836">
    <property type="entry name" value="PRibTrfase_dom"/>
</dbReference>
<dbReference type="InterPro" id="IPR029057">
    <property type="entry name" value="PRTase-like"/>
</dbReference>
<dbReference type="InterPro" id="IPR050054">
    <property type="entry name" value="UPRTase/APRTase"/>
</dbReference>
<dbReference type="NCBIfam" id="TIGR01090">
    <property type="entry name" value="apt"/>
    <property type="match status" value="1"/>
</dbReference>
<dbReference type="NCBIfam" id="NF002634">
    <property type="entry name" value="PRK02304.1-3"/>
    <property type="match status" value="1"/>
</dbReference>
<dbReference type="NCBIfam" id="NF002636">
    <property type="entry name" value="PRK02304.1-5"/>
    <property type="match status" value="1"/>
</dbReference>
<dbReference type="PANTHER" id="PTHR32315">
    <property type="entry name" value="ADENINE PHOSPHORIBOSYLTRANSFERASE"/>
    <property type="match status" value="1"/>
</dbReference>
<dbReference type="PANTHER" id="PTHR32315:SF3">
    <property type="entry name" value="ADENINE PHOSPHORIBOSYLTRANSFERASE"/>
    <property type="match status" value="1"/>
</dbReference>
<dbReference type="Pfam" id="PF00156">
    <property type="entry name" value="Pribosyltran"/>
    <property type="match status" value="1"/>
</dbReference>
<dbReference type="SUPFAM" id="SSF53271">
    <property type="entry name" value="PRTase-like"/>
    <property type="match status" value="1"/>
</dbReference>
<dbReference type="PROSITE" id="PS00103">
    <property type="entry name" value="PUR_PYR_PR_TRANSFER"/>
    <property type="match status" value="1"/>
</dbReference>